<organism>
    <name type="scientific">Ectopseudomonas mendocina (strain ymp)</name>
    <name type="common">Pseudomonas mendocina</name>
    <dbReference type="NCBI Taxonomy" id="399739"/>
    <lineage>
        <taxon>Bacteria</taxon>
        <taxon>Pseudomonadati</taxon>
        <taxon>Pseudomonadota</taxon>
        <taxon>Gammaproteobacteria</taxon>
        <taxon>Pseudomonadales</taxon>
        <taxon>Pseudomonadaceae</taxon>
        <taxon>Ectopseudomonas</taxon>
    </lineage>
</organism>
<gene>
    <name evidence="1" type="primary">ydiU</name>
    <name evidence="1" type="synonym">selO</name>
    <name type="ordered locus">Pmen_0558</name>
</gene>
<feature type="chain" id="PRO_1000062032" description="Protein nucleotidyltransferase YdiU">
    <location>
        <begin position="1"/>
        <end position="487"/>
    </location>
</feature>
<feature type="active site" description="Proton acceptor" evidence="1">
    <location>
        <position position="252"/>
    </location>
</feature>
<feature type="binding site" evidence="1">
    <location>
        <position position="90"/>
    </location>
    <ligand>
        <name>ATP</name>
        <dbReference type="ChEBI" id="CHEBI:30616"/>
    </ligand>
</feature>
<feature type="binding site" evidence="1">
    <location>
        <position position="92"/>
    </location>
    <ligand>
        <name>ATP</name>
        <dbReference type="ChEBI" id="CHEBI:30616"/>
    </ligand>
</feature>
<feature type="binding site" evidence="1">
    <location>
        <position position="93"/>
    </location>
    <ligand>
        <name>ATP</name>
        <dbReference type="ChEBI" id="CHEBI:30616"/>
    </ligand>
</feature>
<feature type="binding site" evidence="1">
    <location>
        <position position="113"/>
    </location>
    <ligand>
        <name>ATP</name>
        <dbReference type="ChEBI" id="CHEBI:30616"/>
    </ligand>
</feature>
<feature type="binding site" evidence="1">
    <location>
        <position position="125"/>
    </location>
    <ligand>
        <name>ATP</name>
        <dbReference type="ChEBI" id="CHEBI:30616"/>
    </ligand>
</feature>
<feature type="binding site" evidence="1">
    <location>
        <position position="126"/>
    </location>
    <ligand>
        <name>ATP</name>
        <dbReference type="ChEBI" id="CHEBI:30616"/>
    </ligand>
</feature>
<feature type="binding site" evidence="1">
    <location>
        <position position="176"/>
    </location>
    <ligand>
        <name>ATP</name>
        <dbReference type="ChEBI" id="CHEBI:30616"/>
    </ligand>
</feature>
<feature type="binding site" evidence="1">
    <location>
        <position position="183"/>
    </location>
    <ligand>
        <name>ATP</name>
        <dbReference type="ChEBI" id="CHEBI:30616"/>
    </ligand>
</feature>
<feature type="binding site" evidence="1">
    <location>
        <position position="253"/>
    </location>
    <ligand>
        <name>Mg(2+)</name>
        <dbReference type="ChEBI" id="CHEBI:18420"/>
    </ligand>
</feature>
<feature type="binding site" evidence="1">
    <location>
        <position position="262"/>
    </location>
    <ligand>
        <name>ATP</name>
        <dbReference type="ChEBI" id="CHEBI:30616"/>
    </ligand>
</feature>
<feature type="binding site" evidence="1">
    <location>
        <position position="262"/>
    </location>
    <ligand>
        <name>Mg(2+)</name>
        <dbReference type="ChEBI" id="CHEBI:18420"/>
    </ligand>
</feature>
<accession>A4XPR2</accession>
<reference key="1">
    <citation type="submission" date="2007-04" db="EMBL/GenBank/DDBJ databases">
        <title>Complete sequence of Pseudomonas mendocina ymp.</title>
        <authorList>
            <consortium name="US DOE Joint Genome Institute"/>
            <person name="Copeland A."/>
            <person name="Lucas S."/>
            <person name="Lapidus A."/>
            <person name="Barry K."/>
            <person name="Glavina del Rio T."/>
            <person name="Dalin E."/>
            <person name="Tice H."/>
            <person name="Pitluck S."/>
            <person name="Kiss H."/>
            <person name="Brettin T."/>
            <person name="Detter J.C."/>
            <person name="Bruce D."/>
            <person name="Han C."/>
            <person name="Schmutz J."/>
            <person name="Larimer F."/>
            <person name="Land M."/>
            <person name="Hauser L."/>
            <person name="Kyrpides N."/>
            <person name="Mikhailova N."/>
            <person name="Hersman L."/>
            <person name="Dubois J."/>
            <person name="Maurice P."/>
            <person name="Richardson P."/>
        </authorList>
    </citation>
    <scope>NUCLEOTIDE SEQUENCE [LARGE SCALE GENOMIC DNA]</scope>
    <source>
        <strain>ymp</strain>
    </source>
</reference>
<name>SELO_ECTM1</name>
<comment type="function">
    <text evidence="1">Nucleotidyltransferase involved in the post-translational modification of proteins. It can catalyze the addition of adenosine monophosphate (AMP) or uridine monophosphate (UMP) to a protein, resulting in modifications known as AMPylation and UMPylation.</text>
</comment>
<comment type="catalytic activity">
    <reaction evidence="1">
        <text>L-seryl-[protein] + ATP = 3-O-(5'-adenylyl)-L-seryl-[protein] + diphosphate</text>
        <dbReference type="Rhea" id="RHEA:58120"/>
        <dbReference type="Rhea" id="RHEA-COMP:9863"/>
        <dbReference type="Rhea" id="RHEA-COMP:15073"/>
        <dbReference type="ChEBI" id="CHEBI:29999"/>
        <dbReference type="ChEBI" id="CHEBI:30616"/>
        <dbReference type="ChEBI" id="CHEBI:33019"/>
        <dbReference type="ChEBI" id="CHEBI:142516"/>
        <dbReference type="EC" id="2.7.7.108"/>
    </reaction>
</comment>
<comment type="catalytic activity">
    <reaction evidence="1">
        <text>L-threonyl-[protein] + ATP = 3-O-(5'-adenylyl)-L-threonyl-[protein] + diphosphate</text>
        <dbReference type="Rhea" id="RHEA:54292"/>
        <dbReference type="Rhea" id="RHEA-COMP:11060"/>
        <dbReference type="Rhea" id="RHEA-COMP:13847"/>
        <dbReference type="ChEBI" id="CHEBI:30013"/>
        <dbReference type="ChEBI" id="CHEBI:30616"/>
        <dbReference type="ChEBI" id="CHEBI:33019"/>
        <dbReference type="ChEBI" id="CHEBI:138113"/>
        <dbReference type="EC" id="2.7.7.108"/>
    </reaction>
</comment>
<comment type="catalytic activity">
    <reaction evidence="1">
        <text>L-tyrosyl-[protein] + ATP = O-(5'-adenylyl)-L-tyrosyl-[protein] + diphosphate</text>
        <dbReference type="Rhea" id="RHEA:54288"/>
        <dbReference type="Rhea" id="RHEA-COMP:10136"/>
        <dbReference type="Rhea" id="RHEA-COMP:13846"/>
        <dbReference type="ChEBI" id="CHEBI:30616"/>
        <dbReference type="ChEBI" id="CHEBI:33019"/>
        <dbReference type="ChEBI" id="CHEBI:46858"/>
        <dbReference type="ChEBI" id="CHEBI:83624"/>
        <dbReference type="EC" id="2.7.7.108"/>
    </reaction>
</comment>
<comment type="catalytic activity">
    <reaction evidence="1">
        <text>L-histidyl-[protein] + UTP = N(tele)-(5'-uridylyl)-L-histidyl-[protein] + diphosphate</text>
        <dbReference type="Rhea" id="RHEA:83891"/>
        <dbReference type="Rhea" id="RHEA-COMP:9745"/>
        <dbReference type="Rhea" id="RHEA-COMP:20239"/>
        <dbReference type="ChEBI" id="CHEBI:29979"/>
        <dbReference type="ChEBI" id="CHEBI:33019"/>
        <dbReference type="ChEBI" id="CHEBI:46398"/>
        <dbReference type="ChEBI" id="CHEBI:233474"/>
    </reaction>
</comment>
<comment type="catalytic activity">
    <reaction evidence="1">
        <text>L-seryl-[protein] + UTP = O-(5'-uridylyl)-L-seryl-[protein] + diphosphate</text>
        <dbReference type="Rhea" id="RHEA:64604"/>
        <dbReference type="Rhea" id="RHEA-COMP:9863"/>
        <dbReference type="Rhea" id="RHEA-COMP:16635"/>
        <dbReference type="ChEBI" id="CHEBI:29999"/>
        <dbReference type="ChEBI" id="CHEBI:33019"/>
        <dbReference type="ChEBI" id="CHEBI:46398"/>
        <dbReference type="ChEBI" id="CHEBI:156051"/>
    </reaction>
</comment>
<comment type="catalytic activity">
    <reaction evidence="1">
        <text>L-tyrosyl-[protein] + UTP = O-(5'-uridylyl)-L-tyrosyl-[protein] + diphosphate</text>
        <dbReference type="Rhea" id="RHEA:83887"/>
        <dbReference type="Rhea" id="RHEA-COMP:10136"/>
        <dbReference type="Rhea" id="RHEA-COMP:20238"/>
        <dbReference type="ChEBI" id="CHEBI:33019"/>
        <dbReference type="ChEBI" id="CHEBI:46398"/>
        <dbReference type="ChEBI" id="CHEBI:46858"/>
        <dbReference type="ChEBI" id="CHEBI:90602"/>
    </reaction>
</comment>
<comment type="cofactor">
    <cofactor evidence="1">
        <name>Mg(2+)</name>
        <dbReference type="ChEBI" id="CHEBI:18420"/>
    </cofactor>
    <cofactor evidence="1">
        <name>Mn(2+)</name>
        <dbReference type="ChEBI" id="CHEBI:29035"/>
    </cofactor>
</comment>
<comment type="similarity">
    <text evidence="1">Belongs to the SELO family.</text>
</comment>
<protein>
    <recommendedName>
        <fullName evidence="1">Protein nucleotidyltransferase YdiU</fullName>
        <ecNumber evidence="1">2.7.7.-</ecNumber>
    </recommendedName>
    <alternativeName>
        <fullName evidence="1">Protein adenylyltransferase YdiU</fullName>
        <ecNumber evidence="1">2.7.7.108</ecNumber>
    </alternativeName>
    <alternativeName>
        <fullName evidence="1">Protein uridylyltransferase YdiU</fullName>
        <ecNumber evidence="1">2.7.7.-</ecNumber>
    </alternativeName>
</protein>
<dbReference type="EC" id="2.7.7.-" evidence="1"/>
<dbReference type="EC" id="2.7.7.108" evidence="1"/>
<dbReference type="EMBL" id="CP000680">
    <property type="protein sequence ID" value="ABP83328.1"/>
    <property type="molecule type" value="Genomic_DNA"/>
</dbReference>
<dbReference type="SMR" id="A4XPR2"/>
<dbReference type="STRING" id="399739.Pmen_0558"/>
<dbReference type="KEGG" id="pmy:Pmen_0558"/>
<dbReference type="PATRIC" id="fig|399739.8.peg.567"/>
<dbReference type="eggNOG" id="COG0397">
    <property type="taxonomic scope" value="Bacteria"/>
</dbReference>
<dbReference type="HOGENOM" id="CLU_010245_4_0_6"/>
<dbReference type="OrthoDB" id="9776281at2"/>
<dbReference type="GO" id="GO:0070733">
    <property type="term" value="F:AMPylase activity"/>
    <property type="evidence" value="ECO:0007669"/>
    <property type="project" value="TreeGrafter"/>
</dbReference>
<dbReference type="GO" id="GO:0005524">
    <property type="term" value="F:ATP binding"/>
    <property type="evidence" value="ECO:0007669"/>
    <property type="project" value="UniProtKB-UniRule"/>
</dbReference>
<dbReference type="GO" id="GO:0000287">
    <property type="term" value="F:magnesium ion binding"/>
    <property type="evidence" value="ECO:0007669"/>
    <property type="project" value="UniProtKB-UniRule"/>
</dbReference>
<dbReference type="HAMAP" id="MF_00692">
    <property type="entry name" value="YdiU_SelO"/>
    <property type="match status" value="1"/>
</dbReference>
<dbReference type="InterPro" id="IPR003846">
    <property type="entry name" value="SelO"/>
</dbReference>
<dbReference type="NCBIfam" id="NF000658">
    <property type="entry name" value="PRK00029.1"/>
    <property type="match status" value="1"/>
</dbReference>
<dbReference type="NCBIfam" id="NF045949">
    <property type="entry name" value="PrtAdtaseSelOPseudom"/>
    <property type="match status" value="1"/>
</dbReference>
<dbReference type="PANTHER" id="PTHR32057">
    <property type="entry name" value="PROTEIN ADENYLYLTRANSFERASE SELO, MITOCHONDRIAL"/>
    <property type="match status" value="1"/>
</dbReference>
<dbReference type="PANTHER" id="PTHR32057:SF14">
    <property type="entry name" value="PROTEIN ADENYLYLTRANSFERASE SELO, MITOCHONDRIAL"/>
    <property type="match status" value="1"/>
</dbReference>
<dbReference type="Pfam" id="PF02696">
    <property type="entry name" value="SelO"/>
    <property type="match status" value="1"/>
</dbReference>
<keyword id="KW-0067">ATP-binding</keyword>
<keyword id="KW-0460">Magnesium</keyword>
<keyword id="KW-0464">Manganese</keyword>
<keyword id="KW-0479">Metal-binding</keyword>
<keyword id="KW-0547">Nucleotide-binding</keyword>
<keyword id="KW-0548">Nucleotidyltransferase</keyword>
<keyword id="KW-0808">Transferase</keyword>
<evidence type="ECO:0000255" key="1">
    <source>
        <dbReference type="HAMAP-Rule" id="MF_00692"/>
    </source>
</evidence>
<proteinExistence type="inferred from homology"/>
<sequence>MKKLDQLTFDNRFARLGDAFSTEVLPEPIEQPRLVVASSDAMALLDLDPAEAQREEFAELFAGHKLWGEAEPRAMVYSGHQFGGYTPRLGDGRGLLLGEVVNAAGEHWDLHLKGAGQTPYSRMGDGRAVLRSSIREFLASEHLHALGIPSSRALCVTTSDTPVWREKQERAAMVLRLAPSHVRFGHFEYFYYTRQHEQLKVLGEHVLANHFPQCLTQDEPWLAMFREVLERTAAMIAHWQAYGFCHGVMNTDNMSILGITFDYGPYAFLDDFDANHICNHSDDTGRYSFSNQVPIAHWNLAALAQALTPMIEVEKLRETLELFLPLYQAHYLDLMRKRLGLTSAEDDDEALVQRLLQLMQQGKATDYSLFFRQLGEQAPADALQVVRNDFVDLAGFDAWGRDYLARCEREGQQQDERRARMHAVNPLYILRNYLAQQVIEAAEAGDYGPVRELHAVLSRPFDEQPGMQRYAQRPPEWGKHLEISCSS</sequence>